<reference key="1">
    <citation type="journal article" date="1990" name="Development">
        <title>Isolation of the mouse Hox-2.9 gene; analysis of embryonic expression suggests that positional information along the anterior-posterior axis is specified by mesoderm.</title>
        <authorList>
            <person name="Frohman M.A."/>
            <person name="Boyle M."/>
            <person name="Martin G.R."/>
        </authorList>
    </citation>
    <scope>NUCLEOTIDE SEQUENCE [GENOMIC DNA]</scope>
    <source>
        <tissue>Liver</tissue>
    </source>
</reference>
<reference key="2">
    <citation type="journal article" date="1991" name="Development">
        <title>Expression of the mouse labial-like homeobox-containing genes, Hox 2.9 and Hox 1.6, during segmentation of the hindbrain.</title>
        <authorList>
            <person name="Murphy P."/>
            <person name="Hill R.E."/>
        </authorList>
    </citation>
    <scope>NUCLEOTIDE SEQUENCE [MRNA]</scope>
</reference>
<reference key="3">
    <citation type="journal article" date="2005" name="Science">
        <title>The transcriptional landscape of the mammalian genome.</title>
        <authorList>
            <person name="Carninci P."/>
            <person name="Kasukawa T."/>
            <person name="Katayama S."/>
            <person name="Gough J."/>
            <person name="Frith M.C."/>
            <person name="Maeda N."/>
            <person name="Oyama R."/>
            <person name="Ravasi T."/>
            <person name="Lenhard B."/>
            <person name="Wells C."/>
            <person name="Kodzius R."/>
            <person name="Shimokawa K."/>
            <person name="Bajic V.B."/>
            <person name="Brenner S.E."/>
            <person name="Batalov S."/>
            <person name="Forrest A.R."/>
            <person name="Zavolan M."/>
            <person name="Davis M.J."/>
            <person name="Wilming L.G."/>
            <person name="Aidinis V."/>
            <person name="Allen J.E."/>
            <person name="Ambesi-Impiombato A."/>
            <person name="Apweiler R."/>
            <person name="Aturaliya R.N."/>
            <person name="Bailey T.L."/>
            <person name="Bansal M."/>
            <person name="Baxter L."/>
            <person name="Beisel K.W."/>
            <person name="Bersano T."/>
            <person name="Bono H."/>
            <person name="Chalk A.M."/>
            <person name="Chiu K.P."/>
            <person name="Choudhary V."/>
            <person name="Christoffels A."/>
            <person name="Clutterbuck D.R."/>
            <person name="Crowe M.L."/>
            <person name="Dalla E."/>
            <person name="Dalrymple B.P."/>
            <person name="de Bono B."/>
            <person name="Della Gatta G."/>
            <person name="di Bernardo D."/>
            <person name="Down T."/>
            <person name="Engstrom P."/>
            <person name="Fagiolini M."/>
            <person name="Faulkner G."/>
            <person name="Fletcher C.F."/>
            <person name="Fukushima T."/>
            <person name="Furuno M."/>
            <person name="Futaki S."/>
            <person name="Gariboldi M."/>
            <person name="Georgii-Hemming P."/>
            <person name="Gingeras T.R."/>
            <person name="Gojobori T."/>
            <person name="Green R.E."/>
            <person name="Gustincich S."/>
            <person name="Harbers M."/>
            <person name="Hayashi Y."/>
            <person name="Hensch T.K."/>
            <person name="Hirokawa N."/>
            <person name="Hill D."/>
            <person name="Huminiecki L."/>
            <person name="Iacono M."/>
            <person name="Ikeo K."/>
            <person name="Iwama A."/>
            <person name="Ishikawa T."/>
            <person name="Jakt M."/>
            <person name="Kanapin A."/>
            <person name="Katoh M."/>
            <person name="Kawasawa Y."/>
            <person name="Kelso J."/>
            <person name="Kitamura H."/>
            <person name="Kitano H."/>
            <person name="Kollias G."/>
            <person name="Krishnan S.P."/>
            <person name="Kruger A."/>
            <person name="Kummerfeld S.K."/>
            <person name="Kurochkin I.V."/>
            <person name="Lareau L.F."/>
            <person name="Lazarevic D."/>
            <person name="Lipovich L."/>
            <person name="Liu J."/>
            <person name="Liuni S."/>
            <person name="McWilliam S."/>
            <person name="Madan Babu M."/>
            <person name="Madera M."/>
            <person name="Marchionni L."/>
            <person name="Matsuda H."/>
            <person name="Matsuzawa S."/>
            <person name="Miki H."/>
            <person name="Mignone F."/>
            <person name="Miyake S."/>
            <person name="Morris K."/>
            <person name="Mottagui-Tabar S."/>
            <person name="Mulder N."/>
            <person name="Nakano N."/>
            <person name="Nakauchi H."/>
            <person name="Ng P."/>
            <person name="Nilsson R."/>
            <person name="Nishiguchi S."/>
            <person name="Nishikawa S."/>
            <person name="Nori F."/>
            <person name="Ohara O."/>
            <person name="Okazaki Y."/>
            <person name="Orlando V."/>
            <person name="Pang K.C."/>
            <person name="Pavan W.J."/>
            <person name="Pavesi G."/>
            <person name="Pesole G."/>
            <person name="Petrovsky N."/>
            <person name="Piazza S."/>
            <person name="Reed J."/>
            <person name="Reid J.F."/>
            <person name="Ring B.Z."/>
            <person name="Ringwald M."/>
            <person name="Rost B."/>
            <person name="Ruan Y."/>
            <person name="Salzberg S.L."/>
            <person name="Sandelin A."/>
            <person name="Schneider C."/>
            <person name="Schoenbach C."/>
            <person name="Sekiguchi K."/>
            <person name="Semple C.A."/>
            <person name="Seno S."/>
            <person name="Sessa L."/>
            <person name="Sheng Y."/>
            <person name="Shibata Y."/>
            <person name="Shimada H."/>
            <person name="Shimada K."/>
            <person name="Silva D."/>
            <person name="Sinclair B."/>
            <person name="Sperling S."/>
            <person name="Stupka E."/>
            <person name="Sugiura K."/>
            <person name="Sultana R."/>
            <person name="Takenaka Y."/>
            <person name="Taki K."/>
            <person name="Tammoja K."/>
            <person name="Tan S.L."/>
            <person name="Tang S."/>
            <person name="Taylor M.S."/>
            <person name="Tegner J."/>
            <person name="Teichmann S.A."/>
            <person name="Ueda H.R."/>
            <person name="van Nimwegen E."/>
            <person name="Verardo R."/>
            <person name="Wei C.L."/>
            <person name="Yagi K."/>
            <person name="Yamanishi H."/>
            <person name="Zabarovsky E."/>
            <person name="Zhu S."/>
            <person name="Zimmer A."/>
            <person name="Hide W."/>
            <person name="Bult C."/>
            <person name="Grimmond S.M."/>
            <person name="Teasdale R.D."/>
            <person name="Liu E.T."/>
            <person name="Brusic V."/>
            <person name="Quackenbush J."/>
            <person name="Wahlestedt C."/>
            <person name="Mattick J.S."/>
            <person name="Hume D.A."/>
            <person name="Kai C."/>
            <person name="Sasaki D."/>
            <person name="Tomaru Y."/>
            <person name="Fukuda S."/>
            <person name="Kanamori-Katayama M."/>
            <person name="Suzuki M."/>
            <person name="Aoki J."/>
            <person name="Arakawa T."/>
            <person name="Iida J."/>
            <person name="Imamura K."/>
            <person name="Itoh M."/>
            <person name="Kato T."/>
            <person name="Kawaji H."/>
            <person name="Kawagashira N."/>
            <person name="Kawashima T."/>
            <person name="Kojima M."/>
            <person name="Kondo S."/>
            <person name="Konno H."/>
            <person name="Nakano K."/>
            <person name="Ninomiya N."/>
            <person name="Nishio T."/>
            <person name="Okada M."/>
            <person name="Plessy C."/>
            <person name="Shibata K."/>
            <person name="Shiraki T."/>
            <person name="Suzuki S."/>
            <person name="Tagami M."/>
            <person name="Waki K."/>
            <person name="Watahiki A."/>
            <person name="Okamura-Oho Y."/>
            <person name="Suzuki H."/>
            <person name="Kawai J."/>
            <person name="Hayashizaki Y."/>
        </authorList>
    </citation>
    <scope>NUCLEOTIDE SEQUENCE [LARGE SCALE MRNA]</scope>
    <source>
        <strain>C57BL/6J</strain>
    </source>
</reference>
<reference key="4">
    <citation type="journal article" date="2004" name="Genome Res.">
        <title>The status, quality, and expansion of the NIH full-length cDNA project: the Mammalian Gene Collection (MGC).</title>
        <authorList>
            <consortium name="The MGC Project Team"/>
        </authorList>
    </citation>
    <scope>NUCLEOTIDE SEQUENCE [LARGE SCALE MRNA]</scope>
</reference>
<reference key="5">
    <citation type="journal article" date="1990" name="Proc. Natl. Acad. Sci. U.S.A.">
        <title>A yeast artificial chromosome containing the mouse homeobox cluster Hox-2.</title>
        <authorList>
            <person name="Rubock M.J."/>
            <person name="Larin Z."/>
            <person name="Cook M."/>
            <person name="Papalopulu N."/>
            <person name="Krumlauf R."/>
            <person name="Lehrach H."/>
        </authorList>
    </citation>
    <scope>NUCLEOTIDE SEQUENCE [GENOMIC DNA] OF 199-259</scope>
</reference>
<sequence length="297" mass="31672">MDYNRMSSFLEYPLCNRGPSAYSAPTSFPPCSAPAVDSYAGESRYGGGLPSSALQQNSGYPVQQPPSSLGVSFPSPAPSGYAPAACNPSYGPSQYYSVGQSEGDGSYFHPSSYGAQLGGLPDSYGAGGVGSGPYPPPQPPYGTEQTATFASAYDLLSEDKESPCSSEPSTLTPRTFDWMKVKRNPPKTAKVSELGLGAPGGLRTNFTTRQLTELEKEFHFNKYLSRARRVEIAATLELNETQVKIWFQNRRMKQKKREREGGRMPAGPPGCPKEAAGDASDQSACTSPEASPSSITS</sequence>
<keyword id="KW-0217">Developmental protein</keyword>
<keyword id="KW-0238">DNA-binding</keyword>
<keyword id="KW-0371">Homeobox</keyword>
<keyword id="KW-0539">Nucleus</keyword>
<keyword id="KW-1185">Reference proteome</keyword>
<keyword id="KW-0804">Transcription</keyword>
<keyword id="KW-0805">Transcription regulation</keyword>
<comment type="function">
    <text>Sequence-specific transcription factor which is part of a developmental regulatory system that provides cells with specific positional identities on the anterior-posterior axis. Acts on the anterior body structures.</text>
</comment>
<comment type="subcellular location">
    <subcellularLocation>
        <location>Nucleus</location>
    </subcellularLocation>
</comment>
<comment type="developmental stage">
    <text>Expressed along the entire length of the primitive streak. In early neurogenesis it is expressed in lateral and paraxial mesoderm, endoderm and superficial ectoderm or in the neural tube. From late neurogenesis to mid-embryogenesis, it presents similar spatial domains in the lateral mesoderm, endoderm and superficial ectoderm but is not detectable in the posterior hindbrain and has increased dramatically in rhombomere 4.</text>
</comment>
<comment type="similarity">
    <text evidence="3">Belongs to the Antp homeobox family. Labial subfamily.</text>
</comment>
<feature type="chain" id="PRO_0000200108" description="Homeobox protein Hox-B1">
    <location>
        <begin position="1"/>
        <end position="297"/>
    </location>
</feature>
<feature type="DNA-binding region" description="Homeobox" evidence="1">
    <location>
        <begin position="199"/>
        <end position="258"/>
    </location>
</feature>
<feature type="region of interest" description="Disordered" evidence="2">
    <location>
        <begin position="38"/>
        <end position="74"/>
    </location>
</feature>
<feature type="region of interest" description="Disordered" evidence="2">
    <location>
        <begin position="124"/>
        <end position="144"/>
    </location>
</feature>
<feature type="region of interest" description="Disordered" evidence="2">
    <location>
        <begin position="251"/>
        <end position="297"/>
    </location>
</feature>
<feature type="short sequence motif" description="Antp-type hexapeptide">
    <location>
        <begin position="175"/>
        <end position="180"/>
    </location>
</feature>
<feature type="compositionally biased region" description="Polar residues" evidence="2">
    <location>
        <begin position="52"/>
        <end position="70"/>
    </location>
</feature>
<feature type="compositionally biased region" description="Polar residues" evidence="2">
    <location>
        <begin position="280"/>
        <end position="297"/>
    </location>
</feature>
<feature type="sequence conflict" description="In Ref. 2; CAA42078." evidence="3" ref="2">
    <original>S</original>
    <variation>T</variation>
    <location>
        <position position="38"/>
    </location>
</feature>
<feature type="sequence conflict" description="In Ref. 2; CAA42078." evidence="3" ref="2">
    <original>S</original>
    <variation>C</variation>
    <location>
        <position position="162"/>
    </location>
</feature>
<feature type="sequence conflict" description="In Ref. 2." evidence="3" ref="2">
    <original>A</original>
    <variation>P</variation>
    <location>
        <position position="198"/>
    </location>
</feature>
<feature type="sequence conflict" description="In Ref. 2." evidence="3" ref="2">
    <original>G</original>
    <variation>R</variation>
    <location>
        <position position="200"/>
    </location>
</feature>
<feature type="sequence conflict" description="In Ref. 3; BAB30874." evidence="3" ref="3">
    <original>E</original>
    <variation>G</variation>
    <location>
        <position position="217"/>
    </location>
</feature>
<feature type="sequence conflict" description="In Ref. 2; CAA42078." evidence="3" ref="2">
    <original>A</original>
    <variation>P</variation>
    <location>
        <position position="234"/>
    </location>
</feature>
<dbReference type="EMBL" id="X53063">
    <property type="protein sequence ID" value="CAA37238.1"/>
    <property type="molecule type" value="Genomic_DNA"/>
</dbReference>
<dbReference type="EMBL" id="X59474">
    <property type="protein sequence ID" value="CAA42078.1"/>
    <property type="molecule type" value="mRNA"/>
</dbReference>
<dbReference type="EMBL" id="AK017686">
    <property type="protein sequence ID" value="BAB30874.1"/>
    <property type="molecule type" value="mRNA"/>
</dbReference>
<dbReference type="EMBL" id="BC103597">
    <property type="protein sequence ID" value="AAI03598.1"/>
    <property type="molecule type" value="mRNA"/>
</dbReference>
<dbReference type="EMBL" id="BC103598">
    <property type="protein sequence ID" value="AAI03599.1"/>
    <property type="molecule type" value="mRNA"/>
</dbReference>
<dbReference type="EMBL" id="BC103606">
    <property type="protein sequence ID" value="AAI03607.1"/>
    <property type="molecule type" value="mRNA"/>
</dbReference>
<dbReference type="EMBL" id="M34005">
    <property type="protein sequence ID" value="AAA37850.1"/>
    <property type="molecule type" value="Genomic_DNA"/>
</dbReference>
<dbReference type="CCDS" id="CCDS25300.1"/>
<dbReference type="PIR" id="A60082">
    <property type="entry name" value="WJMS29"/>
</dbReference>
<dbReference type="RefSeq" id="NP_032292.3">
    <property type="nucleotide sequence ID" value="NM_008266.5"/>
</dbReference>
<dbReference type="SMR" id="P17919"/>
<dbReference type="BioGRID" id="200375">
    <property type="interactions" value="2"/>
</dbReference>
<dbReference type="CORUM" id="P17919"/>
<dbReference type="FunCoup" id="P17919">
    <property type="interactions" value="1493"/>
</dbReference>
<dbReference type="IntAct" id="P17919">
    <property type="interactions" value="2"/>
</dbReference>
<dbReference type="STRING" id="10090.ENSMUSP00000019117"/>
<dbReference type="PhosphoSitePlus" id="P17919"/>
<dbReference type="PaxDb" id="10090-ENSMUSP00000019117"/>
<dbReference type="Antibodypedia" id="30258">
    <property type="antibodies" value="349 antibodies from 35 providers"/>
</dbReference>
<dbReference type="DNASU" id="15407"/>
<dbReference type="Ensembl" id="ENSMUST00000019117.3">
    <property type="protein sequence ID" value="ENSMUSP00000019117.3"/>
    <property type="gene ID" value="ENSMUSG00000018973.3"/>
</dbReference>
<dbReference type="GeneID" id="15407"/>
<dbReference type="KEGG" id="mmu:15407"/>
<dbReference type="UCSC" id="uc007lbz.2">
    <property type="organism name" value="mouse"/>
</dbReference>
<dbReference type="AGR" id="MGI:96182"/>
<dbReference type="CTD" id="3211"/>
<dbReference type="MGI" id="MGI:96182">
    <property type="gene designation" value="Hoxb1"/>
</dbReference>
<dbReference type="VEuPathDB" id="HostDB:ENSMUSG00000018973"/>
<dbReference type="eggNOG" id="KOG0489">
    <property type="taxonomic scope" value="Eukaryota"/>
</dbReference>
<dbReference type="GeneTree" id="ENSGT00940000159503"/>
<dbReference type="HOGENOM" id="CLU_058839_1_0_1"/>
<dbReference type="InParanoid" id="P17919"/>
<dbReference type="OMA" id="ACNPSYG"/>
<dbReference type="OrthoDB" id="6159439at2759"/>
<dbReference type="PhylomeDB" id="P17919"/>
<dbReference type="TreeFam" id="TF317730"/>
<dbReference type="BioGRID-ORCS" id="15407">
    <property type="hits" value="5 hits in 76 CRISPR screens"/>
</dbReference>
<dbReference type="ChiTaRS" id="Hoxb1">
    <property type="organism name" value="mouse"/>
</dbReference>
<dbReference type="PRO" id="PR:P17919"/>
<dbReference type="Proteomes" id="UP000000589">
    <property type="component" value="Chromosome 11"/>
</dbReference>
<dbReference type="RNAct" id="P17919">
    <property type="molecule type" value="protein"/>
</dbReference>
<dbReference type="Bgee" id="ENSMUSG00000018973">
    <property type="expression patterns" value="Expressed in primitive streak and 65 other cell types or tissues"/>
</dbReference>
<dbReference type="GO" id="GO:0005654">
    <property type="term" value="C:nucleoplasm"/>
    <property type="evidence" value="ECO:0000304"/>
    <property type="project" value="Reactome"/>
</dbReference>
<dbReference type="GO" id="GO:0003677">
    <property type="term" value="F:DNA binding"/>
    <property type="evidence" value="ECO:0000314"/>
    <property type="project" value="MGI"/>
</dbReference>
<dbReference type="GO" id="GO:0001228">
    <property type="term" value="F:DNA-binding transcription activator activity, RNA polymerase II-specific"/>
    <property type="evidence" value="ECO:0007669"/>
    <property type="project" value="Ensembl"/>
</dbReference>
<dbReference type="GO" id="GO:0019904">
    <property type="term" value="F:protein domain specific binding"/>
    <property type="evidence" value="ECO:0007669"/>
    <property type="project" value="Ensembl"/>
</dbReference>
<dbReference type="GO" id="GO:0000978">
    <property type="term" value="F:RNA polymerase II cis-regulatory region sequence-specific DNA binding"/>
    <property type="evidence" value="ECO:0007669"/>
    <property type="project" value="Ensembl"/>
</dbReference>
<dbReference type="GO" id="GO:0043565">
    <property type="term" value="F:sequence-specific DNA binding"/>
    <property type="evidence" value="ECO:0000316"/>
    <property type="project" value="MGI"/>
</dbReference>
<dbReference type="GO" id="GO:0048646">
    <property type="term" value="P:anatomical structure formation involved in morphogenesis"/>
    <property type="evidence" value="ECO:0000316"/>
    <property type="project" value="MGI"/>
</dbReference>
<dbReference type="GO" id="GO:0009653">
    <property type="term" value="P:anatomical structure morphogenesis"/>
    <property type="evidence" value="ECO:0000316"/>
    <property type="project" value="MGI"/>
</dbReference>
<dbReference type="GO" id="GO:0009952">
    <property type="term" value="P:anterior/posterior pattern specification"/>
    <property type="evidence" value="ECO:0000316"/>
    <property type="project" value="MGI"/>
</dbReference>
<dbReference type="GO" id="GO:0048704">
    <property type="term" value="P:embryonic skeletal system morphogenesis"/>
    <property type="evidence" value="ECO:0000316"/>
    <property type="project" value="MGI"/>
</dbReference>
<dbReference type="GO" id="GO:0021612">
    <property type="term" value="P:facial nerve structural organization"/>
    <property type="evidence" value="ECO:0000315"/>
    <property type="project" value="MGI"/>
</dbReference>
<dbReference type="GO" id="GO:0021754">
    <property type="term" value="P:facial nucleus development"/>
    <property type="evidence" value="ECO:0000315"/>
    <property type="project" value="MGI"/>
</dbReference>
<dbReference type="GO" id="GO:0045944">
    <property type="term" value="P:positive regulation of transcription by RNA polymerase II"/>
    <property type="evidence" value="ECO:0000314"/>
    <property type="project" value="MGI"/>
</dbReference>
<dbReference type="GO" id="GO:0021570">
    <property type="term" value="P:rhombomere 4 development"/>
    <property type="evidence" value="ECO:0000316"/>
    <property type="project" value="MGI"/>
</dbReference>
<dbReference type="GO" id="GO:0021571">
    <property type="term" value="P:rhombomere 5 development"/>
    <property type="evidence" value="ECO:0000316"/>
    <property type="project" value="MGI"/>
</dbReference>
<dbReference type="GO" id="GO:0021546">
    <property type="term" value="P:rhombomere development"/>
    <property type="evidence" value="ECO:0000314"/>
    <property type="project" value="MGI"/>
</dbReference>
<dbReference type="CDD" id="cd00086">
    <property type="entry name" value="homeodomain"/>
    <property type="match status" value="1"/>
</dbReference>
<dbReference type="FunFam" id="1.10.10.60:FF:000113">
    <property type="entry name" value="homeobox protein Hox-B1"/>
    <property type="match status" value="1"/>
</dbReference>
<dbReference type="Gene3D" id="1.10.10.60">
    <property type="entry name" value="Homeodomain-like"/>
    <property type="match status" value="1"/>
</dbReference>
<dbReference type="InterPro" id="IPR001356">
    <property type="entry name" value="HD"/>
</dbReference>
<dbReference type="InterPro" id="IPR020479">
    <property type="entry name" value="HD_metazoa"/>
</dbReference>
<dbReference type="InterPro" id="IPR017970">
    <property type="entry name" value="Homeobox_CS"/>
</dbReference>
<dbReference type="InterPro" id="IPR009057">
    <property type="entry name" value="Homeodomain-like_sf"/>
</dbReference>
<dbReference type="InterPro" id="IPR046327">
    <property type="entry name" value="HXA1/B1/D1"/>
</dbReference>
<dbReference type="PANTHER" id="PTHR45946:SF5">
    <property type="entry name" value="HOMEOBOX PROTEIN HOX-B1"/>
    <property type="match status" value="1"/>
</dbReference>
<dbReference type="PANTHER" id="PTHR45946">
    <property type="entry name" value="HOMEOBOX PROTEIN ROUGH-RELATED"/>
    <property type="match status" value="1"/>
</dbReference>
<dbReference type="Pfam" id="PF00046">
    <property type="entry name" value="Homeodomain"/>
    <property type="match status" value="1"/>
</dbReference>
<dbReference type="PRINTS" id="PR00024">
    <property type="entry name" value="HOMEOBOX"/>
</dbReference>
<dbReference type="SMART" id="SM00389">
    <property type="entry name" value="HOX"/>
    <property type="match status" value="1"/>
</dbReference>
<dbReference type="SUPFAM" id="SSF46689">
    <property type="entry name" value="Homeodomain-like"/>
    <property type="match status" value="1"/>
</dbReference>
<dbReference type="PROSITE" id="PS00027">
    <property type="entry name" value="HOMEOBOX_1"/>
    <property type="match status" value="1"/>
</dbReference>
<dbReference type="PROSITE" id="PS50071">
    <property type="entry name" value="HOMEOBOX_2"/>
    <property type="match status" value="1"/>
</dbReference>
<accession>P17919</accession>
<accession>Q3ZAY6</accession>
<accession>Q9CYH3</accession>
<gene>
    <name type="primary">Hoxb1</name>
    <name type="synonym">Hox-2.9</name>
    <name type="synonym">Hoxb-1</name>
</gene>
<protein>
    <recommendedName>
        <fullName>Homeobox protein Hox-B1</fullName>
    </recommendedName>
    <alternativeName>
        <fullName>Homeobox protein Hox-2.9</fullName>
    </alternativeName>
</protein>
<proteinExistence type="evidence at transcript level"/>
<organism>
    <name type="scientific">Mus musculus</name>
    <name type="common">Mouse</name>
    <dbReference type="NCBI Taxonomy" id="10090"/>
    <lineage>
        <taxon>Eukaryota</taxon>
        <taxon>Metazoa</taxon>
        <taxon>Chordata</taxon>
        <taxon>Craniata</taxon>
        <taxon>Vertebrata</taxon>
        <taxon>Euteleostomi</taxon>
        <taxon>Mammalia</taxon>
        <taxon>Eutheria</taxon>
        <taxon>Euarchontoglires</taxon>
        <taxon>Glires</taxon>
        <taxon>Rodentia</taxon>
        <taxon>Myomorpha</taxon>
        <taxon>Muroidea</taxon>
        <taxon>Muridae</taxon>
        <taxon>Murinae</taxon>
        <taxon>Mus</taxon>
        <taxon>Mus</taxon>
    </lineage>
</organism>
<name>HXB1_MOUSE</name>
<evidence type="ECO:0000255" key="1">
    <source>
        <dbReference type="PROSITE-ProRule" id="PRU00108"/>
    </source>
</evidence>
<evidence type="ECO:0000256" key="2">
    <source>
        <dbReference type="SAM" id="MobiDB-lite"/>
    </source>
</evidence>
<evidence type="ECO:0000305" key="3"/>